<protein>
    <recommendedName>
        <fullName evidence="1">dCTP deaminase</fullName>
        <ecNumber evidence="1">3.5.4.13</ecNumber>
    </recommendedName>
    <alternativeName>
        <fullName evidence="1">Deoxycytidine triphosphate deaminase</fullName>
    </alternativeName>
</protein>
<accession>Q83B31</accession>
<dbReference type="EC" id="3.5.4.13" evidence="1"/>
<dbReference type="EMBL" id="AE016828">
    <property type="protein sequence ID" value="AAO91183.1"/>
    <property type="molecule type" value="Genomic_DNA"/>
</dbReference>
<dbReference type="RefSeq" id="NP_820669.1">
    <property type="nucleotide sequence ID" value="NC_002971.3"/>
</dbReference>
<dbReference type="RefSeq" id="WP_005770557.1">
    <property type="nucleotide sequence ID" value="NZ_CDBG01000001.1"/>
</dbReference>
<dbReference type="SMR" id="Q83B31"/>
<dbReference type="STRING" id="227377.CBU_1688"/>
<dbReference type="DNASU" id="1209599"/>
<dbReference type="EnsemblBacteria" id="AAO91183">
    <property type="protein sequence ID" value="AAO91183"/>
    <property type="gene ID" value="CBU_1688"/>
</dbReference>
<dbReference type="GeneID" id="1209599"/>
<dbReference type="KEGG" id="cbu:CBU_1688"/>
<dbReference type="PATRIC" id="fig|227377.7.peg.1677"/>
<dbReference type="eggNOG" id="COG0717">
    <property type="taxonomic scope" value="Bacteria"/>
</dbReference>
<dbReference type="HOGENOM" id="CLU_087476_4_0_6"/>
<dbReference type="OrthoDB" id="9780956at2"/>
<dbReference type="UniPathway" id="UPA00610">
    <property type="reaction ID" value="UER00665"/>
</dbReference>
<dbReference type="Proteomes" id="UP000002671">
    <property type="component" value="Chromosome"/>
</dbReference>
<dbReference type="GO" id="GO:0008829">
    <property type="term" value="F:dCTP deaminase activity"/>
    <property type="evidence" value="ECO:0000318"/>
    <property type="project" value="GO_Central"/>
</dbReference>
<dbReference type="GO" id="GO:0000166">
    <property type="term" value="F:nucleotide binding"/>
    <property type="evidence" value="ECO:0007669"/>
    <property type="project" value="UniProtKB-KW"/>
</dbReference>
<dbReference type="GO" id="GO:0006226">
    <property type="term" value="P:dUMP biosynthetic process"/>
    <property type="evidence" value="ECO:0007669"/>
    <property type="project" value="UniProtKB-UniPathway"/>
</dbReference>
<dbReference type="GO" id="GO:0006229">
    <property type="term" value="P:dUTP biosynthetic process"/>
    <property type="evidence" value="ECO:0007669"/>
    <property type="project" value="UniProtKB-UniRule"/>
</dbReference>
<dbReference type="GO" id="GO:0015949">
    <property type="term" value="P:nucleobase-containing small molecule interconversion"/>
    <property type="evidence" value="ECO:0000318"/>
    <property type="project" value="GO_Central"/>
</dbReference>
<dbReference type="CDD" id="cd07557">
    <property type="entry name" value="trimeric_dUTPase"/>
    <property type="match status" value="1"/>
</dbReference>
<dbReference type="FunFam" id="2.70.40.10:FF:000001">
    <property type="entry name" value="dCTP deaminase"/>
    <property type="match status" value="1"/>
</dbReference>
<dbReference type="Gene3D" id="2.70.40.10">
    <property type="match status" value="1"/>
</dbReference>
<dbReference type="HAMAP" id="MF_00146">
    <property type="entry name" value="dCTP_deaminase"/>
    <property type="match status" value="1"/>
</dbReference>
<dbReference type="InterPro" id="IPR011962">
    <property type="entry name" value="dCTP_deaminase"/>
</dbReference>
<dbReference type="InterPro" id="IPR036157">
    <property type="entry name" value="dUTPase-like_sf"/>
</dbReference>
<dbReference type="InterPro" id="IPR033704">
    <property type="entry name" value="dUTPase_trimeric"/>
</dbReference>
<dbReference type="NCBIfam" id="TIGR02274">
    <property type="entry name" value="dCTP_deam"/>
    <property type="match status" value="1"/>
</dbReference>
<dbReference type="PANTHER" id="PTHR42680">
    <property type="entry name" value="DCTP DEAMINASE"/>
    <property type="match status" value="1"/>
</dbReference>
<dbReference type="PANTHER" id="PTHR42680:SF3">
    <property type="entry name" value="DCTP DEAMINASE"/>
    <property type="match status" value="1"/>
</dbReference>
<dbReference type="Pfam" id="PF22769">
    <property type="entry name" value="DCD"/>
    <property type="match status" value="1"/>
</dbReference>
<dbReference type="SUPFAM" id="SSF51283">
    <property type="entry name" value="dUTPase-like"/>
    <property type="match status" value="1"/>
</dbReference>
<sequence length="188" mass="21135">MPIKSDKWIRRMAESHQLIYPFEPKQVRETPSGKVISYGTSSYGYDVRCADEFKIFTNINASIVDPKNFDPNGFIDLKANVCIIPPNSFVLARTVEYFKIPRNILTICLGKSTYARCGIIVNVTPLEPEWEGHVTLEFSNTTNLPAKIYANEGVAQMLFLESDEVCDISYKDRGGKYQGQKGVTLPVA</sequence>
<organism>
    <name type="scientific">Coxiella burnetii (strain RSA 493 / Nine Mile phase I)</name>
    <dbReference type="NCBI Taxonomy" id="227377"/>
    <lineage>
        <taxon>Bacteria</taxon>
        <taxon>Pseudomonadati</taxon>
        <taxon>Pseudomonadota</taxon>
        <taxon>Gammaproteobacteria</taxon>
        <taxon>Legionellales</taxon>
        <taxon>Coxiellaceae</taxon>
        <taxon>Coxiella</taxon>
    </lineage>
</organism>
<comment type="function">
    <text evidence="1">Catalyzes the deamination of dCTP to dUTP.</text>
</comment>
<comment type="catalytic activity">
    <reaction evidence="1">
        <text>dCTP + H2O + H(+) = dUTP + NH4(+)</text>
        <dbReference type="Rhea" id="RHEA:22680"/>
        <dbReference type="ChEBI" id="CHEBI:15377"/>
        <dbReference type="ChEBI" id="CHEBI:15378"/>
        <dbReference type="ChEBI" id="CHEBI:28938"/>
        <dbReference type="ChEBI" id="CHEBI:61481"/>
        <dbReference type="ChEBI" id="CHEBI:61555"/>
        <dbReference type="EC" id="3.5.4.13"/>
    </reaction>
</comment>
<comment type="pathway">
    <text evidence="1">Pyrimidine metabolism; dUMP biosynthesis; dUMP from dCTP (dUTP route): step 1/2.</text>
</comment>
<comment type="subunit">
    <text evidence="1">Homotrimer.</text>
</comment>
<comment type="similarity">
    <text evidence="1">Belongs to the dCTP deaminase family.</text>
</comment>
<reference key="1">
    <citation type="journal article" date="2003" name="Proc. Natl. Acad. Sci. U.S.A.">
        <title>Complete genome sequence of the Q-fever pathogen, Coxiella burnetii.</title>
        <authorList>
            <person name="Seshadri R."/>
            <person name="Paulsen I.T."/>
            <person name="Eisen J.A."/>
            <person name="Read T.D."/>
            <person name="Nelson K.E."/>
            <person name="Nelson W.C."/>
            <person name="Ward N.L."/>
            <person name="Tettelin H."/>
            <person name="Davidsen T.M."/>
            <person name="Beanan M.J."/>
            <person name="DeBoy R.T."/>
            <person name="Daugherty S.C."/>
            <person name="Brinkac L.M."/>
            <person name="Madupu R."/>
            <person name="Dodson R.J."/>
            <person name="Khouri H.M."/>
            <person name="Lee K.H."/>
            <person name="Carty H.A."/>
            <person name="Scanlan D."/>
            <person name="Heinzen R.A."/>
            <person name="Thompson H.A."/>
            <person name="Samuel J.E."/>
            <person name="Fraser C.M."/>
            <person name="Heidelberg J.F."/>
        </authorList>
    </citation>
    <scope>NUCLEOTIDE SEQUENCE [LARGE SCALE GENOMIC DNA]</scope>
    <source>
        <strain>RSA 493 / Nine Mile phase I</strain>
    </source>
</reference>
<evidence type="ECO:0000255" key="1">
    <source>
        <dbReference type="HAMAP-Rule" id="MF_00146"/>
    </source>
</evidence>
<proteinExistence type="inferred from homology"/>
<feature type="chain" id="PRO_0000155983" description="dCTP deaminase">
    <location>
        <begin position="1"/>
        <end position="188"/>
    </location>
</feature>
<feature type="active site" description="Proton donor/acceptor" evidence="1">
    <location>
        <position position="137"/>
    </location>
</feature>
<feature type="binding site" evidence="1">
    <location>
        <begin position="111"/>
        <end position="116"/>
    </location>
    <ligand>
        <name>dCTP</name>
        <dbReference type="ChEBI" id="CHEBI:61481"/>
    </ligand>
</feature>
<feature type="binding site" evidence="1">
    <location>
        <begin position="135"/>
        <end position="137"/>
    </location>
    <ligand>
        <name>dCTP</name>
        <dbReference type="ChEBI" id="CHEBI:61481"/>
    </ligand>
</feature>
<feature type="binding site" evidence="1">
    <location>
        <position position="156"/>
    </location>
    <ligand>
        <name>dCTP</name>
        <dbReference type="ChEBI" id="CHEBI:61481"/>
    </ligand>
</feature>
<feature type="binding site" evidence="1">
    <location>
        <position position="170"/>
    </location>
    <ligand>
        <name>dCTP</name>
        <dbReference type="ChEBI" id="CHEBI:61481"/>
    </ligand>
</feature>
<feature type="binding site" evidence="1">
    <location>
        <position position="180"/>
    </location>
    <ligand>
        <name>dCTP</name>
        <dbReference type="ChEBI" id="CHEBI:61481"/>
    </ligand>
</feature>
<keyword id="KW-0378">Hydrolase</keyword>
<keyword id="KW-0546">Nucleotide metabolism</keyword>
<keyword id="KW-0547">Nucleotide-binding</keyword>
<keyword id="KW-1185">Reference proteome</keyword>
<name>DCD_COXBU</name>
<gene>
    <name evidence="1" type="primary">dcd</name>
    <name type="ordered locus">CBU_1688</name>
</gene>